<feature type="chain" id="PRO_1000074550" description="Phospho-N-acetylmuramoyl-pentapeptide-transferase">
    <location>
        <begin position="1"/>
        <end position="326"/>
    </location>
</feature>
<feature type="transmembrane region" description="Helical" evidence="1">
    <location>
        <begin position="4"/>
        <end position="24"/>
    </location>
</feature>
<feature type="transmembrane region" description="Helical" evidence="1">
    <location>
        <begin position="49"/>
        <end position="69"/>
    </location>
</feature>
<feature type="transmembrane region" description="Helical" evidence="1">
    <location>
        <begin position="74"/>
        <end position="94"/>
    </location>
</feature>
<feature type="transmembrane region" description="Helical" evidence="1">
    <location>
        <begin position="109"/>
        <end position="129"/>
    </location>
</feature>
<feature type="transmembrane region" description="Helical" evidence="1">
    <location>
        <begin position="151"/>
        <end position="171"/>
    </location>
</feature>
<feature type="transmembrane region" description="Helical" evidence="1">
    <location>
        <begin position="179"/>
        <end position="199"/>
    </location>
</feature>
<feature type="transmembrane region" description="Helical" evidence="1">
    <location>
        <begin position="203"/>
        <end position="223"/>
    </location>
</feature>
<feature type="transmembrane region" description="Helical" evidence="1">
    <location>
        <begin position="228"/>
        <end position="248"/>
    </location>
</feature>
<feature type="transmembrane region" description="Helical" evidence="1">
    <location>
        <begin position="254"/>
        <end position="274"/>
    </location>
</feature>
<feature type="transmembrane region" description="Helical" evidence="1">
    <location>
        <begin position="303"/>
        <end position="323"/>
    </location>
</feature>
<accession>A5D148</accession>
<keyword id="KW-0131">Cell cycle</keyword>
<keyword id="KW-0132">Cell division</keyword>
<keyword id="KW-1003">Cell membrane</keyword>
<keyword id="KW-0133">Cell shape</keyword>
<keyword id="KW-0961">Cell wall biogenesis/degradation</keyword>
<keyword id="KW-0460">Magnesium</keyword>
<keyword id="KW-0472">Membrane</keyword>
<keyword id="KW-0479">Metal-binding</keyword>
<keyword id="KW-0573">Peptidoglycan synthesis</keyword>
<keyword id="KW-1185">Reference proteome</keyword>
<keyword id="KW-0808">Transferase</keyword>
<keyword id="KW-0812">Transmembrane</keyword>
<keyword id="KW-1133">Transmembrane helix</keyword>
<proteinExistence type="inferred from homology"/>
<sequence length="326" mass="34252">MGNIWVAFTVSLAVTLIAGPLVIPVLRRLKFGQSIRSDGPSRHLQKAGTPTMGGIIFLAGTAAGGFLLIRSADGLIVLLMALGYGFIGFLDDYIKVVLKRSLGLRAREKLLGQVLLAAALAYWAVFEAGRGTGIVLPFSGFLTPGGIQMDLGWWPFLAFTVLLVVFMSNAVNLTDGLDGLAAGVSMLVALALVPVALAADRAGVAAGMAALAGGCLGFLFFNFHPAKVFMGDTGSLALGGGLCAAAVVTKSELLFLIIGGIYVLEALSVIIQVISFQTTGRRVFRMSPLHHHFELGGWSENRVVITFWALTLVFAAAGLAGLYRLV</sequence>
<evidence type="ECO:0000255" key="1">
    <source>
        <dbReference type="HAMAP-Rule" id="MF_00038"/>
    </source>
</evidence>
<name>MRAY_PELTS</name>
<reference key="1">
    <citation type="journal article" date="2008" name="Genome Res.">
        <title>The genome of Pelotomaculum thermopropionicum reveals niche-associated evolution in anaerobic microbiota.</title>
        <authorList>
            <person name="Kosaka T."/>
            <person name="Kato S."/>
            <person name="Shimoyama T."/>
            <person name="Ishii S."/>
            <person name="Abe T."/>
            <person name="Watanabe K."/>
        </authorList>
    </citation>
    <scope>NUCLEOTIDE SEQUENCE [LARGE SCALE GENOMIC DNA]</scope>
    <source>
        <strain>DSM 13744 / JCM 10971 / SI</strain>
    </source>
</reference>
<dbReference type="EC" id="2.7.8.13" evidence="1"/>
<dbReference type="EMBL" id="AP009389">
    <property type="protein sequence ID" value="BAF60045.1"/>
    <property type="molecule type" value="Genomic_DNA"/>
</dbReference>
<dbReference type="SMR" id="A5D148"/>
<dbReference type="STRING" id="370438.PTH_1864"/>
<dbReference type="KEGG" id="pth:PTH_1864"/>
<dbReference type="eggNOG" id="COG0472">
    <property type="taxonomic scope" value="Bacteria"/>
</dbReference>
<dbReference type="HOGENOM" id="CLU_023982_0_1_9"/>
<dbReference type="UniPathway" id="UPA00219"/>
<dbReference type="Proteomes" id="UP000006556">
    <property type="component" value="Chromosome"/>
</dbReference>
<dbReference type="GO" id="GO:0005886">
    <property type="term" value="C:plasma membrane"/>
    <property type="evidence" value="ECO:0007669"/>
    <property type="project" value="UniProtKB-SubCell"/>
</dbReference>
<dbReference type="GO" id="GO:0046872">
    <property type="term" value="F:metal ion binding"/>
    <property type="evidence" value="ECO:0007669"/>
    <property type="project" value="UniProtKB-KW"/>
</dbReference>
<dbReference type="GO" id="GO:0008963">
    <property type="term" value="F:phospho-N-acetylmuramoyl-pentapeptide-transferase activity"/>
    <property type="evidence" value="ECO:0007669"/>
    <property type="project" value="UniProtKB-UniRule"/>
</dbReference>
<dbReference type="GO" id="GO:0051992">
    <property type="term" value="F:UDP-N-acetylmuramoyl-L-alanyl-D-glutamyl-meso-2,6-diaminopimelyl-D-alanyl-D-alanine:undecaprenyl-phosphate transferase activity"/>
    <property type="evidence" value="ECO:0007669"/>
    <property type="project" value="RHEA"/>
</dbReference>
<dbReference type="GO" id="GO:0051301">
    <property type="term" value="P:cell division"/>
    <property type="evidence" value="ECO:0007669"/>
    <property type="project" value="UniProtKB-KW"/>
</dbReference>
<dbReference type="GO" id="GO:0071555">
    <property type="term" value="P:cell wall organization"/>
    <property type="evidence" value="ECO:0007669"/>
    <property type="project" value="UniProtKB-KW"/>
</dbReference>
<dbReference type="GO" id="GO:0009252">
    <property type="term" value="P:peptidoglycan biosynthetic process"/>
    <property type="evidence" value="ECO:0007669"/>
    <property type="project" value="UniProtKB-UniRule"/>
</dbReference>
<dbReference type="GO" id="GO:0008360">
    <property type="term" value="P:regulation of cell shape"/>
    <property type="evidence" value="ECO:0007669"/>
    <property type="project" value="UniProtKB-KW"/>
</dbReference>
<dbReference type="CDD" id="cd06852">
    <property type="entry name" value="GT_MraY"/>
    <property type="match status" value="1"/>
</dbReference>
<dbReference type="HAMAP" id="MF_00038">
    <property type="entry name" value="MraY"/>
    <property type="match status" value="1"/>
</dbReference>
<dbReference type="InterPro" id="IPR000715">
    <property type="entry name" value="Glycosyl_transferase_4"/>
</dbReference>
<dbReference type="InterPro" id="IPR003524">
    <property type="entry name" value="PNAcMuramoyl-5peptid_Trfase"/>
</dbReference>
<dbReference type="InterPro" id="IPR018480">
    <property type="entry name" value="PNAcMuramoyl-5peptid_Trfase_CS"/>
</dbReference>
<dbReference type="NCBIfam" id="TIGR00445">
    <property type="entry name" value="mraY"/>
    <property type="match status" value="1"/>
</dbReference>
<dbReference type="PANTHER" id="PTHR22926">
    <property type="entry name" value="PHOSPHO-N-ACETYLMURAMOYL-PENTAPEPTIDE-TRANSFERASE"/>
    <property type="match status" value="1"/>
</dbReference>
<dbReference type="PANTHER" id="PTHR22926:SF5">
    <property type="entry name" value="PHOSPHO-N-ACETYLMURAMOYL-PENTAPEPTIDE-TRANSFERASE HOMOLOG"/>
    <property type="match status" value="1"/>
</dbReference>
<dbReference type="Pfam" id="PF00953">
    <property type="entry name" value="Glycos_transf_4"/>
    <property type="match status" value="1"/>
</dbReference>
<dbReference type="Pfam" id="PF10555">
    <property type="entry name" value="MraY_sig1"/>
    <property type="match status" value="1"/>
</dbReference>
<dbReference type="PROSITE" id="PS01347">
    <property type="entry name" value="MRAY_1"/>
    <property type="match status" value="1"/>
</dbReference>
<dbReference type="PROSITE" id="PS01348">
    <property type="entry name" value="MRAY_2"/>
    <property type="match status" value="1"/>
</dbReference>
<protein>
    <recommendedName>
        <fullName evidence="1">Phospho-N-acetylmuramoyl-pentapeptide-transferase</fullName>
        <ecNumber evidence="1">2.7.8.13</ecNumber>
    </recommendedName>
    <alternativeName>
        <fullName evidence="1">UDP-MurNAc-pentapeptide phosphotransferase</fullName>
    </alternativeName>
</protein>
<gene>
    <name evidence="1" type="primary">mraY</name>
    <name type="ordered locus">PTH_1864</name>
</gene>
<comment type="function">
    <text evidence="1">Catalyzes the initial step of the lipid cycle reactions in the biosynthesis of the cell wall peptidoglycan: transfers peptidoglycan precursor phospho-MurNAc-pentapeptide from UDP-MurNAc-pentapeptide onto the lipid carrier undecaprenyl phosphate, yielding undecaprenyl-pyrophosphoryl-MurNAc-pentapeptide, known as lipid I.</text>
</comment>
<comment type="catalytic activity">
    <reaction evidence="1">
        <text>UDP-N-acetyl-alpha-D-muramoyl-L-alanyl-gamma-D-glutamyl-meso-2,6-diaminopimeloyl-D-alanyl-D-alanine + di-trans,octa-cis-undecaprenyl phosphate = di-trans,octa-cis-undecaprenyl diphospho-N-acetyl-alpha-D-muramoyl-L-alanyl-D-glutamyl-meso-2,6-diaminopimeloyl-D-alanyl-D-alanine + UMP</text>
        <dbReference type="Rhea" id="RHEA:28386"/>
        <dbReference type="ChEBI" id="CHEBI:57865"/>
        <dbReference type="ChEBI" id="CHEBI:60392"/>
        <dbReference type="ChEBI" id="CHEBI:61386"/>
        <dbReference type="ChEBI" id="CHEBI:61387"/>
        <dbReference type="EC" id="2.7.8.13"/>
    </reaction>
</comment>
<comment type="cofactor">
    <cofactor evidence="1">
        <name>Mg(2+)</name>
        <dbReference type="ChEBI" id="CHEBI:18420"/>
    </cofactor>
</comment>
<comment type="pathway">
    <text evidence="1">Cell wall biogenesis; peptidoglycan biosynthesis.</text>
</comment>
<comment type="subcellular location">
    <subcellularLocation>
        <location evidence="1">Cell membrane</location>
        <topology evidence="1">Multi-pass membrane protein</topology>
    </subcellularLocation>
</comment>
<comment type="similarity">
    <text evidence="1">Belongs to the glycosyltransferase 4 family. MraY subfamily.</text>
</comment>
<organism>
    <name type="scientific">Pelotomaculum thermopropionicum (strain DSM 13744 / JCM 10971 / SI)</name>
    <dbReference type="NCBI Taxonomy" id="370438"/>
    <lineage>
        <taxon>Bacteria</taxon>
        <taxon>Bacillati</taxon>
        <taxon>Bacillota</taxon>
        <taxon>Clostridia</taxon>
        <taxon>Eubacteriales</taxon>
        <taxon>Desulfotomaculaceae</taxon>
        <taxon>Pelotomaculum</taxon>
    </lineage>
</organism>